<evidence type="ECO:0000255" key="1">
    <source>
        <dbReference type="HAMAP-Rule" id="MF_01307"/>
    </source>
</evidence>
<evidence type="ECO:0000256" key="2">
    <source>
        <dbReference type="SAM" id="MobiDB-lite"/>
    </source>
</evidence>
<evidence type="ECO:0000305" key="3"/>
<sequence>MPGRQRRDGGNGPAGQNSNGPEGRDNRRGGGDRRGGGDRRDNAAEKNQLERVVAINRVSKVVKGGRRFSFTALVIVGDGNGLVGVGYGKAKEVPAAIQKGVEEARKGFFRVPMIGSTITHPVQGEAAAGVVMLRPASPGTGVIAGGAARAVLECAGIHDILAKSLGSDNAINVVHATVAALKQLQRPEEVAARRGLPLEDVAPAGMLRARAQAAGGAR</sequence>
<accession>Q5Z1Q5</accession>
<reference key="1">
    <citation type="journal article" date="2004" name="Proc. Natl. Acad. Sci. U.S.A.">
        <title>The complete genomic sequence of Nocardia farcinica IFM 10152.</title>
        <authorList>
            <person name="Ishikawa J."/>
            <person name="Yamashita A."/>
            <person name="Mikami Y."/>
            <person name="Hoshino Y."/>
            <person name="Kurita H."/>
            <person name="Hotta K."/>
            <person name="Shiba T."/>
            <person name="Hattori M."/>
        </authorList>
    </citation>
    <scope>NUCLEOTIDE SEQUENCE [LARGE SCALE GENOMIC DNA]</scope>
    <source>
        <strain>IFM 10152</strain>
    </source>
</reference>
<feature type="chain" id="PRO_0000131562" description="Small ribosomal subunit protein uS5">
    <location>
        <begin position="1"/>
        <end position="218"/>
    </location>
</feature>
<feature type="domain" description="S5 DRBM" evidence="1">
    <location>
        <begin position="48"/>
        <end position="111"/>
    </location>
</feature>
<feature type="region of interest" description="Disordered" evidence="2">
    <location>
        <begin position="1"/>
        <end position="45"/>
    </location>
</feature>
<feature type="compositionally biased region" description="Basic and acidic residues" evidence="2">
    <location>
        <begin position="22"/>
        <end position="45"/>
    </location>
</feature>
<organism>
    <name type="scientific">Nocardia farcinica (strain IFM 10152)</name>
    <dbReference type="NCBI Taxonomy" id="247156"/>
    <lineage>
        <taxon>Bacteria</taxon>
        <taxon>Bacillati</taxon>
        <taxon>Actinomycetota</taxon>
        <taxon>Actinomycetes</taxon>
        <taxon>Mycobacteriales</taxon>
        <taxon>Nocardiaceae</taxon>
        <taxon>Nocardia</taxon>
    </lineage>
</organism>
<proteinExistence type="inferred from homology"/>
<dbReference type="EMBL" id="AP006618">
    <property type="protein sequence ID" value="BAD55636.1"/>
    <property type="molecule type" value="Genomic_DNA"/>
</dbReference>
<dbReference type="RefSeq" id="WP_011207322.1">
    <property type="nucleotide sequence ID" value="NC_006361.1"/>
</dbReference>
<dbReference type="SMR" id="Q5Z1Q5"/>
<dbReference type="STRING" id="247156.NFA_7910"/>
<dbReference type="GeneID" id="61131622"/>
<dbReference type="KEGG" id="nfa:NFA_7910"/>
<dbReference type="eggNOG" id="COG0098">
    <property type="taxonomic scope" value="Bacteria"/>
</dbReference>
<dbReference type="HOGENOM" id="CLU_065898_2_1_11"/>
<dbReference type="OrthoDB" id="9809045at2"/>
<dbReference type="Proteomes" id="UP000006820">
    <property type="component" value="Chromosome"/>
</dbReference>
<dbReference type="GO" id="GO:0015935">
    <property type="term" value="C:small ribosomal subunit"/>
    <property type="evidence" value="ECO:0007669"/>
    <property type="project" value="InterPro"/>
</dbReference>
<dbReference type="GO" id="GO:0019843">
    <property type="term" value="F:rRNA binding"/>
    <property type="evidence" value="ECO:0007669"/>
    <property type="project" value="UniProtKB-UniRule"/>
</dbReference>
<dbReference type="GO" id="GO:0003735">
    <property type="term" value="F:structural constituent of ribosome"/>
    <property type="evidence" value="ECO:0007669"/>
    <property type="project" value="InterPro"/>
</dbReference>
<dbReference type="GO" id="GO:0006412">
    <property type="term" value="P:translation"/>
    <property type="evidence" value="ECO:0007669"/>
    <property type="project" value="UniProtKB-UniRule"/>
</dbReference>
<dbReference type="FunFam" id="3.30.160.20:FF:000001">
    <property type="entry name" value="30S ribosomal protein S5"/>
    <property type="match status" value="1"/>
</dbReference>
<dbReference type="FunFam" id="3.30.230.10:FF:000002">
    <property type="entry name" value="30S ribosomal protein S5"/>
    <property type="match status" value="1"/>
</dbReference>
<dbReference type="Gene3D" id="3.30.160.20">
    <property type="match status" value="1"/>
</dbReference>
<dbReference type="Gene3D" id="3.30.230.10">
    <property type="match status" value="1"/>
</dbReference>
<dbReference type="HAMAP" id="MF_01307_B">
    <property type="entry name" value="Ribosomal_uS5_B"/>
    <property type="match status" value="1"/>
</dbReference>
<dbReference type="InterPro" id="IPR020568">
    <property type="entry name" value="Ribosomal_Su5_D2-typ_SF"/>
</dbReference>
<dbReference type="InterPro" id="IPR000851">
    <property type="entry name" value="Ribosomal_uS5"/>
</dbReference>
<dbReference type="InterPro" id="IPR005712">
    <property type="entry name" value="Ribosomal_uS5_bac-type"/>
</dbReference>
<dbReference type="InterPro" id="IPR005324">
    <property type="entry name" value="Ribosomal_uS5_C"/>
</dbReference>
<dbReference type="InterPro" id="IPR013810">
    <property type="entry name" value="Ribosomal_uS5_N"/>
</dbReference>
<dbReference type="InterPro" id="IPR018192">
    <property type="entry name" value="Ribosomal_uS5_N_CS"/>
</dbReference>
<dbReference type="InterPro" id="IPR014721">
    <property type="entry name" value="Ribsml_uS5_D2-typ_fold_subgr"/>
</dbReference>
<dbReference type="NCBIfam" id="TIGR01021">
    <property type="entry name" value="rpsE_bact"/>
    <property type="match status" value="1"/>
</dbReference>
<dbReference type="PANTHER" id="PTHR48277">
    <property type="entry name" value="MITOCHONDRIAL RIBOSOMAL PROTEIN S5"/>
    <property type="match status" value="1"/>
</dbReference>
<dbReference type="PANTHER" id="PTHR48277:SF1">
    <property type="entry name" value="MITOCHONDRIAL RIBOSOMAL PROTEIN S5"/>
    <property type="match status" value="1"/>
</dbReference>
<dbReference type="Pfam" id="PF00333">
    <property type="entry name" value="Ribosomal_S5"/>
    <property type="match status" value="1"/>
</dbReference>
<dbReference type="Pfam" id="PF03719">
    <property type="entry name" value="Ribosomal_S5_C"/>
    <property type="match status" value="1"/>
</dbReference>
<dbReference type="SUPFAM" id="SSF54768">
    <property type="entry name" value="dsRNA-binding domain-like"/>
    <property type="match status" value="1"/>
</dbReference>
<dbReference type="SUPFAM" id="SSF54211">
    <property type="entry name" value="Ribosomal protein S5 domain 2-like"/>
    <property type="match status" value="1"/>
</dbReference>
<dbReference type="PROSITE" id="PS00585">
    <property type="entry name" value="RIBOSOMAL_S5"/>
    <property type="match status" value="1"/>
</dbReference>
<dbReference type="PROSITE" id="PS50881">
    <property type="entry name" value="S5_DSRBD"/>
    <property type="match status" value="1"/>
</dbReference>
<keyword id="KW-1185">Reference proteome</keyword>
<keyword id="KW-0687">Ribonucleoprotein</keyword>
<keyword id="KW-0689">Ribosomal protein</keyword>
<keyword id="KW-0694">RNA-binding</keyword>
<keyword id="KW-0699">rRNA-binding</keyword>
<name>RS5_NOCFA</name>
<gene>
    <name evidence="1" type="primary">rpsE</name>
    <name type="ordered locus">NFA_7910</name>
</gene>
<comment type="function">
    <text evidence="1">With S4 and S12 plays an important role in translational accuracy.</text>
</comment>
<comment type="function">
    <text evidence="1">Located at the back of the 30S subunit body where it stabilizes the conformation of the head with respect to the body.</text>
</comment>
<comment type="subunit">
    <text evidence="1">Part of the 30S ribosomal subunit. Contacts proteins S4 and S8.</text>
</comment>
<comment type="domain">
    <text>The N-terminal domain interacts with the head of the 30S subunit; the C-terminal domain interacts with the body and contacts protein S4. The interaction surface between S4 and S5 is involved in control of translational fidelity.</text>
</comment>
<comment type="similarity">
    <text evidence="1">Belongs to the universal ribosomal protein uS5 family.</text>
</comment>
<protein>
    <recommendedName>
        <fullName evidence="1">Small ribosomal subunit protein uS5</fullName>
    </recommendedName>
    <alternativeName>
        <fullName evidence="3">30S ribosomal protein S5</fullName>
    </alternativeName>
</protein>